<dbReference type="EMBL" id="BX571965">
    <property type="protein sequence ID" value="CAH37208.1"/>
    <property type="molecule type" value="Genomic_DNA"/>
</dbReference>
<dbReference type="RefSeq" id="WP_004197946.1">
    <property type="nucleotide sequence ID" value="NZ_CP009538.1"/>
</dbReference>
<dbReference type="RefSeq" id="YP_109791.1">
    <property type="nucleotide sequence ID" value="NC_006350.1"/>
</dbReference>
<dbReference type="SMR" id="Q63Q27"/>
<dbReference type="STRING" id="272560.BPSL3197"/>
<dbReference type="GeneID" id="93061816"/>
<dbReference type="KEGG" id="bps:BPSL3197"/>
<dbReference type="PATRIC" id="fig|272560.51.peg.2041"/>
<dbReference type="eggNOG" id="COG0256">
    <property type="taxonomic scope" value="Bacteria"/>
</dbReference>
<dbReference type="Proteomes" id="UP000000605">
    <property type="component" value="Chromosome 1"/>
</dbReference>
<dbReference type="GO" id="GO:0022625">
    <property type="term" value="C:cytosolic large ribosomal subunit"/>
    <property type="evidence" value="ECO:0007669"/>
    <property type="project" value="TreeGrafter"/>
</dbReference>
<dbReference type="GO" id="GO:0008097">
    <property type="term" value="F:5S rRNA binding"/>
    <property type="evidence" value="ECO:0007669"/>
    <property type="project" value="TreeGrafter"/>
</dbReference>
<dbReference type="GO" id="GO:0003735">
    <property type="term" value="F:structural constituent of ribosome"/>
    <property type="evidence" value="ECO:0007669"/>
    <property type="project" value="InterPro"/>
</dbReference>
<dbReference type="GO" id="GO:0006412">
    <property type="term" value="P:translation"/>
    <property type="evidence" value="ECO:0007669"/>
    <property type="project" value="UniProtKB-UniRule"/>
</dbReference>
<dbReference type="CDD" id="cd00432">
    <property type="entry name" value="Ribosomal_L18_L5e"/>
    <property type="match status" value="1"/>
</dbReference>
<dbReference type="FunFam" id="3.30.420.100:FF:000001">
    <property type="entry name" value="50S ribosomal protein L18"/>
    <property type="match status" value="1"/>
</dbReference>
<dbReference type="Gene3D" id="3.30.420.100">
    <property type="match status" value="1"/>
</dbReference>
<dbReference type="HAMAP" id="MF_01337_B">
    <property type="entry name" value="Ribosomal_uL18_B"/>
    <property type="match status" value="1"/>
</dbReference>
<dbReference type="InterPro" id="IPR004389">
    <property type="entry name" value="Ribosomal_uL18_bac-type"/>
</dbReference>
<dbReference type="InterPro" id="IPR005484">
    <property type="entry name" value="Ribosomal_uL18_bac/euk"/>
</dbReference>
<dbReference type="NCBIfam" id="TIGR00060">
    <property type="entry name" value="L18_bact"/>
    <property type="match status" value="1"/>
</dbReference>
<dbReference type="PANTHER" id="PTHR12899">
    <property type="entry name" value="39S RIBOSOMAL PROTEIN L18, MITOCHONDRIAL"/>
    <property type="match status" value="1"/>
</dbReference>
<dbReference type="PANTHER" id="PTHR12899:SF3">
    <property type="entry name" value="LARGE RIBOSOMAL SUBUNIT PROTEIN UL18M"/>
    <property type="match status" value="1"/>
</dbReference>
<dbReference type="Pfam" id="PF00861">
    <property type="entry name" value="Ribosomal_L18p"/>
    <property type="match status" value="1"/>
</dbReference>
<dbReference type="SUPFAM" id="SSF53137">
    <property type="entry name" value="Translational machinery components"/>
    <property type="match status" value="1"/>
</dbReference>
<protein>
    <recommendedName>
        <fullName evidence="1">Large ribosomal subunit protein uL18</fullName>
    </recommendedName>
    <alternativeName>
        <fullName evidence="2">50S ribosomal protein L18</fullName>
    </alternativeName>
</protein>
<gene>
    <name evidence="1" type="primary">rplR</name>
    <name type="ordered locus">BPSL3197</name>
</gene>
<proteinExistence type="inferred from homology"/>
<reference key="1">
    <citation type="journal article" date="2004" name="Proc. Natl. Acad. Sci. U.S.A.">
        <title>Genomic plasticity of the causative agent of melioidosis, Burkholderia pseudomallei.</title>
        <authorList>
            <person name="Holden M.T.G."/>
            <person name="Titball R.W."/>
            <person name="Peacock S.J."/>
            <person name="Cerdeno-Tarraga A.-M."/>
            <person name="Atkins T."/>
            <person name="Crossman L.C."/>
            <person name="Pitt T."/>
            <person name="Churcher C."/>
            <person name="Mungall K.L."/>
            <person name="Bentley S.D."/>
            <person name="Sebaihia M."/>
            <person name="Thomson N.R."/>
            <person name="Bason N."/>
            <person name="Beacham I.R."/>
            <person name="Brooks K."/>
            <person name="Brown K.A."/>
            <person name="Brown N.F."/>
            <person name="Challis G.L."/>
            <person name="Cherevach I."/>
            <person name="Chillingworth T."/>
            <person name="Cronin A."/>
            <person name="Crossett B."/>
            <person name="Davis P."/>
            <person name="DeShazer D."/>
            <person name="Feltwell T."/>
            <person name="Fraser A."/>
            <person name="Hance Z."/>
            <person name="Hauser H."/>
            <person name="Holroyd S."/>
            <person name="Jagels K."/>
            <person name="Keith K.E."/>
            <person name="Maddison M."/>
            <person name="Moule S."/>
            <person name="Price C."/>
            <person name="Quail M.A."/>
            <person name="Rabbinowitsch E."/>
            <person name="Rutherford K."/>
            <person name="Sanders M."/>
            <person name="Simmonds M."/>
            <person name="Songsivilai S."/>
            <person name="Stevens K."/>
            <person name="Tumapa S."/>
            <person name="Vesaratchavest M."/>
            <person name="Whitehead S."/>
            <person name="Yeats C."/>
            <person name="Barrell B.G."/>
            <person name="Oyston P.C.F."/>
            <person name="Parkhill J."/>
        </authorList>
    </citation>
    <scope>NUCLEOTIDE SEQUENCE [LARGE SCALE GENOMIC DNA]</scope>
    <source>
        <strain>K96243</strain>
    </source>
</reference>
<comment type="function">
    <text evidence="1">This is one of the proteins that bind and probably mediate the attachment of the 5S RNA into the large ribosomal subunit, where it forms part of the central protuberance.</text>
</comment>
<comment type="subunit">
    <text evidence="1">Part of the 50S ribosomal subunit; part of the 5S rRNA/L5/L18/L25 subcomplex. Contacts the 5S and 23S rRNAs.</text>
</comment>
<comment type="similarity">
    <text evidence="1">Belongs to the universal ribosomal protein uL18 family.</text>
</comment>
<feature type="chain" id="PRO_0000131236" description="Large ribosomal subunit protein uL18">
    <location>
        <begin position="1"/>
        <end position="121"/>
    </location>
</feature>
<evidence type="ECO:0000255" key="1">
    <source>
        <dbReference type="HAMAP-Rule" id="MF_01337"/>
    </source>
</evidence>
<evidence type="ECO:0000305" key="2"/>
<accession>Q63Q27</accession>
<sequence>MDKTQSRLRRARQTRIKIAELQVARLAVHRTNTHIYAQVFSPCGTKVLASASTLEAEVRAQLADKSGKGGNVAAATLIGKRIAEKAKAAGIESVAFDRSGFRYHGRVKALAEAAREAGLKF</sequence>
<organism>
    <name type="scientific">Burkholderia pseudomallei (strain K96243)</name>
    <dbReference type="NCBI Taxonomy" id="272560"/>
    <lineage>
        <taxon>Bacteria</taxon>
        <taxon>Pseudomonadati</taxon>
        <taxon>Pseudomonadota</taxon>
        <taxon>Betaproteobacteria</taxon>
        <taxon>Burkholderiales</taxon>
        <taxon>Burkholderiaceae</taxon>
        <taxon>Burkholderia</taxon>
        <taxon>pseudomallei group</taxon>
    </lineage>
</organism>
<name>RL18_BURPS</name>
<keyword id="KW-1185">Reference proteome</keyword>
<keyword id="KW-0687">Ribonucleoprotein</keyword>
<keyword id="KW-0689">Ribosomal protein</keyword>
<keyword id="KW-0694">RNA-binding</keyword>
<keyword id="KW-0699">rRNA-binding</keyword>